<dbReference type="EC" id="1.6.5.-" evidence="1"/>
<dbReference type="EC" id="1.7.1.17" evidence="1"/>
<dbReference type="EMBL" id="AE017244">
    <property type="protein sequence ID" value="AAZ53822.1"/>
    <property type="molecule type" value="Genomic_DNA"/>
</dbReference>
<dbReference type="RefSeq" id="WP_011290271.1">
    <property type="nucleotide sequence ID" value="NC_007332.1"/>
</dbReference>
<dbReference type="SMR" id="Q4A7R7"/>
<dbReference type="KEGG" id="mhp:MHP7448_0455"/>
<dbReference type="HOGENOM" id="CLU_088964_2_0_14"/>
<dbReference type="Proteomes" id="UP000000553">
    <property type="component" value="Chromosome"/>
</dbReference>
<dbReference type="GO" id="GO:0009055">
    <property type="term" value="F:electron transfer activity"/>
    <property type="evidence" value="ECO:0007669"/>
    <property type="project" value="UniProtKB-UniRule"/>
</dbReference>
<dbReference type="GO" id="GO:0010181">
    <property type="term" value="F:FMN binding"/>
    <property type="evidence" value="ECO:0007669"/>
    <property type="project" value="UniProtKB-UniRule"/>
</dbReference>
<dbReference type="GO" id="GO:0016652">
    <property type="term" value="F:oxidoreductase activity, acting on NAD(P)H as acceptor"/>
    <property type="evidence" value="ECO:0007669"/>
    <property type="project" value="UniProtKB-UniRule"/>
</dbReference>
<dbReference type="GO" id="GO:0016655">
    <property type="term" value="F:oxidoreductase activity, acting on NAD(P)H, quinone or similar compound as acceptor"/>
    <property type="evidence" value="ECO:0007669"/>
    <property type="project" value="InterPro"/>
</dbReference>
<dbReference type="Gene3D" id="3.40.50.360">
    <property type="match status" value="1"/>
</dbReference>
<dbReference type="HAMAP" id="MF_01216">
    <property type="entry name" value="Azoreductase_type1"/>
    <property type="match status" value="1"/>
</dbReference>
<dbReference type="InterPro" id="IPR003680">
    <property type="entry name" value="Flavodoxin_fold"/>
</dbReference>
<dbReference type="InterPro" id="IPR029039">
    <property type="entry name" value="Flavoprotein-like_sf"/>
</dbReference>
<dbReference type="InterPro" id="IPR050104">
    <property type="entry name" value="FMN-dep_NADH:Q_OxRdtase_AzoR1"/>
</dbReference>
<dbReference type="InterPro" id="IPR023048">
    <property type="entry name" value="NADH:quinone_OxRdtase_FMN_depd"/>
</dbReference>
<dbReference type="NCBIfam" id="NF002370">
    <property type="entry name" value="PRK01355.1"/>
    <property type="match status" value="1"/>
</dbReference>
<dbReference type="PANTHER" id="PTHR43741">
    <property type="entry name" value="FMN-DEPENDENT NADH-AZOREDUCTASE 1"/>
    <property type="match status" value="1"/>
</dbReference>
<dbReference type="PANTHER" id="PTHR43741:SF4">
    <property type="entry name" value="FMN-DEPENDENT NADH:QUINONE OXIDOREDUCTASE"/>
    <property type="match status" value="1"/>
</dbReference>
<dbReference type="Pfam" id="PF02525">
    <property type="entry name" value="Flavodoxin_2"/>
    <property type="match status" value="1"/>
</dbReference>
<dbReference type="SUPFAM" id="SSF52218">
    <property type="entry name" value="Flavoproteins"/>
    <property type="match status" value="1"/>
</dbReference>
<evidence type="ECO:0000255" key="1">
    <source>
        <dbReference type="HAMAP-Rule" id="MF_01216"/>
    </source>
</evidence>
<name>AZOR_MESH7</name>
<gene>
    <name evidence="1" type="primary">azoR</name>
    <name type="ordered locus">MHP7448_0455</name>
</gene>
<accession>Q4A7R7</accession>
<organism>
    <name type="scientific">Mesomycoplasma hyopneumoniae (strain 7448)</name>
    <name type="common">Mycoplasma hyopneumoniae</name>
    <dbReference type="NCBI Taxonomy" id="262722"/>
    <lineage>
        <taxon>Bacteria</taxon>
        <taxon>Bacillati</taxon>
        <taxon>Mycoplasmatota</taxon>
        <taxon>Mycoplasmoidales</taxon>
        <taxon>Metamycoplasmataceae</taxon>
        <taxon>Mesomycoplasma</taxon>
    </lineage>
</organism>
<reference key="1">
    <citation type="journal article" date="2005" name="J. Bacteriol.">
        <title>Swine and poultry pathogens: the complete genome sequences of two strains of Mycoplasma hyopneumoniae and a strain of Mycoplasma synoviae.</title>
        <authorList>
            <person name="Vasconcelos A.T.R."/>
            <person name="Ferreira H.B."/>
            <person name="Bizarro C.V."/>
            <person name="Bonatto S.L."/>
            <person name="Carvalho M.O."/>
            <person name="Pinto P.M."/>
            <person name="Almeida D.F."/>
            <person name="Almeida L.G.P."/>
            <person name="Almeida R."/>
            <person name="Alves-Junior L."/>
            <person name="Assuncao E.N."/>
            <person name="Azevedo V.A.C."/>
            <person name="Bogo M.R."/>
            <person name="Brigido M.M."/>
            <person name="Brocchi M."/>
            <person name="Burity H.A."/>
            <person name="Camargo A.A."/>
            <person name="Camargo S.S."/>
            <person name="Carepo M.S."/>
            <person name="Carraro D.M."/>
            <person name="de Mattos Cascardo J.C."/>
            <person name="Castro L.A."/>
            <person name="Cavalcanti G."/>
            <person name="Chemale G."/>
            <person name="Collevatti R.G."/>
            <person name="Cunha C.W."/>
            <person name="Dallagiovanna B."/>
            <person name="Dambros B.P."/>
            <person name="Dellagostin O.A."/>
            <person name="Falcao C."/>
            <person name="Fantinatti-Garboggini F."/>
            <person name="Felipe M.S.S."/>
            <person name="Fiorentin L."/>
            <person name="Franco G.R."/>
            <person name="Freitas N.S.A."/>
            <person name="Frias D."/>
            <person name="Grangeiro T.B."/>
            <person name="Grisard E.C."/>
            <person name="Guimaraes C.T."/>
            <person name="Hungria M."/>
            <person name="Jardim S.N."/>
            <person name="Krieger M.A."/>
            <person name="Laurino J.P."/>
            <person name="Lima L.F.A."/>
            <person name="Lopes M.I."/>
            <person name="Loreto E.L.S."/>
            <person name="Madeira H.M.F."/>
            <person name="Manfio G.P."/>
            <person name="Maranhao A.Q."/>
            <person name="Martinkovics C.T."/>
            <person name="Medeiros S.R.B."/>
            <person name="Moreira M.A.M."/>
            <person name="Neiva M."/>
            <person name="Ramalho-Neto C.E."/>
            <person name="Nicolas M.F."/>
            <person name="Oliveira S.C."/>
            <person name="Paixao R.F.C."/>
            <person name="Pedrosa F.O."/>
            <person name="Pena S.D.J."/>
            <person name="Pereira M."/>
            <person name="Pereira-Ferrari L."/>
            <person name="Piffer I."/>
            <person name="Pinto L.S."/>
            <person name="Potrich D.P."/>
            <person name="Salim A.C.M."/>
            <person name="Santos F.R."/>
            <person name="Schmitt R."/>
            <person name="Schneider M.P.C."/>
            <person name="Schrank A."/>
            <person name="Schrank I.S."/>
            <person name="Schuck A.F."/>
            <person name="Seuanez H.N."/>
            <person name="Silva D.W."/>
            <person name="Silva R."/>
            <person name="Silva S.C."/>
            <person name="Soares C.M.A."/>
            <person name="Souza K.R.L."/>
            <person name="Souza R.C."/>
            <person name="Staats C.C."/>
            <person name="Steffens M.B.R."/>
            <person name="Teixeira S.M.R."/>
            <person name="Urmenyi T.P."/>
            <person name="Vainstein M.H."/>
            <person name="Zuccherato L.W."/>
            <person name="Simpson A.J.G."/>
            <person name="Zaha A."/>
        </authorList>
    </citation>
    <scope>NUCLEOTIDE SEQUENCE [LARGE SCALE GENOMIC DNA]</scope>
    <source>
        <strain>7448</strain>
    </source>
</reference>
<keyword id="KW-0285">Flavoprotein</keyword>
<keyword id="KW-0288">FMN</keyword>
<keyword id="KW-0520">NAD</keyword>
<keyword id="KW-0560">Oxidoreductase</keyword>
<feature type="chain" id="PRO_0000245934" description="FMN-dependent NADH:quinone oxidoreductase">
    <location>
        <begin position="1"/>
        <end position="201"/>
    </location>
</feature>
<feature type="binding site" evidence="1">
    <location>
        <position position="9"/>
    </location>
    <ligand>
        <name>FMN</name>
        <dbReference type="ChEBI" id="CHEBI:58210"/>
    </ligand>
</feature>
<feature type="binding site" evidence="1">
    <location>
        <begin position="16"/>
        <end position="18"/>
    </location>
    <ligand>
        <name>FMN</name>
        <dbReference type="ChEBI" id="CHEBI:58210"/>
    </ligand>
</feature>
<comment type="function">
    <text evidence="1">Quinone reductase that provides resistance to thiol-specific stress caused by electrophilic quinones.</text>
</comment>
<comment type="function">
    <text evidence="1">Also exhibits azoreductase activity. Catalyzes the reductive cleavage of the azo bond in aromatic azo compounds to the corresponding amines.</text>
</comment>
<comment type="catalytic activity">
    <reaction evidence="1">
        <text>2 a quinone + NADH + H(+) = 2 a 1,4-benzosemiquinone + NAD(+)</text>
        <dbReference type="Rhea" id="RHEA:65952"/>
        <dbReference type="ChEBI" id="CHEBI:15378"/>
        <dbReference type="ChEBI" id="CHEBI:57540"/>
        <dbReference type="ChEBI" id="CHEBI:57945"/>
        <dbReference type="ChEBI" id="CHEBI:132124"/>
        <dbReference type="ChEBI" id="CHEBI:134225"/>
    </reaction>
</comment>
<comment type="catalytic activity">
    <reaction evidence="1">
        <text>N,N-dimethyl-1,4-phenylenediamine + anthranilate + 2 NAD(+) = 2-(4-dimethylaminophenyl)diazenylbenzoate + 2 NADH + 2 H(+)</text>
        <dbReference type="Rhea" id="RHEA:55872"/>
        <dbReference type="ChEBI" id="CHEBI:15378"/>
        <dbReference type="ChEBI" id="CHEBI:15783"/>
        <dbReference type="ChEBI" id="CHEBI:16567"/>
        <dbReference type="ChEBI" id="CHEBI:57540"/>
        <dbReference type="ChEBI" id="CHEBI:57945"/>
        <dbReference type="ChEBI" id="CHEBI:71579"/>
        <dbReference type="EC" id="1.7.1.17"/>
    </reaction>
</comment>
<comment type="cofactor">
    <cofactor evidence="1">
        <name>FMN</name>
        <dbReference type="ChEBI" id="CHEBI:58210"/>
    </cofactor>
    <text evidence="1">Binds 1 FMN per subunit.</text>
</comment>
<comment type="subunit">
    <text evidence="1">Homodimer.</text>
</comment>
<comment type="similarity">
    <text evidence="1">Belongs to the azoreductase type 1 family.</text>
</comment>
<protein>
    <recommendedName>
        <fullName evidence="1">FMN-dependent NADH:quinone oxidoreductase</fullName>
        <ecNumber evidence="1">1.6.5.-</ecNumber>
    </recommendedName>
    <alternativeName>
        <fullName evidence="1">Azo-dye reductase</fullName>
    </alternativeName>
    <alternativeName>
        <fullName evidence="1">FMN-dependent NADH-azo compound oxidoreductase</fullName>
    </alternativeName>
    <alternativeName>
        <fullName evidence="1">FMN-dependent NADH-azoreductase</fullName>
        <ecNumber evidence="1">1.7.1.17</ecNumber>
    </alternativeName>
</protein>
<sequence>MNILVIKSSVNEKKGSYSSHLSDLFIKFYLEIHPEDQIEVYDLNQFGLANTNLTMKNFEDKTFYQKAESDFWINKLRNADKIVFSTSMTNFNYSATTKNFFDAITVPNKTFLLDKNTGKYTGLLKNIQNVQILTAQGAPLGWYPFGNHSALIKQIFEFLGAKVRSDFFVLDGTKVAPNNQKPIADFVAQRQNQIKILAENF</sequence>
<proteinExistence type="inferred from homology"/>